<organism>
    <name type="scientific">Rhizobium johnstonii (strain DSM 114642 / LMG 32736 / 3841)</name>
    <name type="common">Rhizobium leguminosarum bv. viciae</name>
    <dbReference type="NCBI Taxonomy" id="216596"/>
    <lineage>
        <taxon>Bacteria</taxon>
        <taxon>Pseudomonadati</taxon>
        <taxon>Pseudomonadota</taxon>
        <taxon>Alphaproteobacteria</taxon>
        <taxon>Hyphomicrobiales</taxon>
        <taxon>Rhizobiaceae</taxon>
        <taxon>Rhizobium/Agrobacterium group</taxon>
        <taxon>Rhizobium</taxon>
        <taxon>Rhizobium johnstonii</taxon>
    </lineage>
</organism>
<gene>
    <name evidence="1" type="primary">ccmA</name>
    <name type="ordered locus">RL4537</name>
</gene>
<protein>
    <recommendedName>
        <fullName evidence="1">Cytochrome c biogenesis ATP-binding export protein CcmA</fullName>
        <ecNumber evidence="1">7.6.2.5</ecNumber>
    </recommendedName>
    <alternativeName>
        <fullName evidence="1">Heme exporter protein A</fullName>
    </alternativeName>
</protein>
<proteinExistence type="inferred from homology"/>
<accession>Q1MAL7</accession>
<dbReference type="EC" id="7.6.2.5" evidence="1"/>
<dbReference type="EMBL" id="AM236080">
    <property type="protein sequence ID" value="CAK10021.1"/>
    <property type="molecule type" value="Genomic_DNA"/>
</dbReference>
<dbReference type="RefSeq" id="WP_011653895.1">
    <property type="nucleotide sequence ID" value="NC_008380.1"/>
</dbReference>
<dbReference type="SMR" id="Q1MAL7"/>
<dbReference type="EnsemblBacteria" id="CAK10021">
    <property type="protein sequence ID" value="CAK10021"/>
    <property type="gene ID" value="RL4537"/>
</dbReference>
<dbReference type="KEGG" id="rle:RL4537"/>
<dbReference type="eggNOG" id="COG4133">
    <property type="taxonomic scope" value="Bacteria"/>
</dbReference>
<dbReference type="HOGENOM" id="CLU_000604_1_2_5"/>
<dbReference type="Proteomes" id="UP000006575">
    <property type="component" value="Chromosome"/>
</dbReference>
<dbReference type="GO" id="GO:0005886">
    <property type="term" value="C:plasma membrane"/>
    <property type="evidence" value="ECO:0007669"/>
    <property type="project" value="UniProtKB-SubCell"/>
</dbReference>
<dbReference type="GO" id="GO:0015439">
    <property type="term" value="F:ABC-type heme transporter activity"/>
    <property type="evidence" value="ECO:0007669"/>
    <property type="project" value="UniProtKB-EC"/>
</dbReference>
<dbReference type="GO" id="GO:0005524">
    <property type="term" value="F:ATP binding"/>
    <property type="evidence" value="ECO:0007669"/>
    <property type="project" value="UniProtKB-KW"/>
</dbReference>
<dbReference type="GO" id="GO:0016887">
    <property type="term" value="F:ATP hydrolysis activity"/>
    <property type="evidence" value="ECO:0007669"/>
    <property type="project" value="InterPro"/>
</dbReference>
<dbReference type="GO" id="GO:0017004">
    <property type="term" value="P:cytochrome complex assembly"/>
    <property type="evidence" value="ECO:0007669"/>
    <property type="project" value="UniProtKB-KW"/>
</dbReference>
<dbReference type="Gene3D" id="3.40.50.300">
    <property type="entry name" value="P-loop containing nucleotide triphosphate hydrolases"/>
    <property type="match status" value="1"/>
</dbReference>
<dbReference type="InterPro" id="IPR003593">
    <property type="entry name" value="AAA+_ATPase"/>
</dbReference>
<dbReference type="InterPro" id="IPR003439">
    <property type="entry name" value="ABC_transporter-like_ATP-bd"/>
</dbReference>
<dbReference type="InterPro" id="IPR017871">
    <property type="entry name" value="ABC_transporter-like_CS"/>
</dbReference>
<dbReference type="InterPro" id="IPR005895">
    <property type="entry name" value="ABC_transptr_haem_export_CcmA"/>
</dbReference>
<dbReference type="InterPro" id="IPR027417">
    <property type="entry name" value="P-loop_NTPase"/>
</dbReference>
<dbReference type="NCBIfam" id="TIGR01189">
    <property type="entry name" value="ccmA"/>
    <property type="match status" value="1"/>
</dbReference>
<dbReference type="PANTHER" id="PTHR43499">
    <property type="entry name" value="ABC TRANSPORTER I FAMILY MEMBER 1"/>
    <property type="match status" value="1"/>
</dbReference>
<dbReference type="PANTHER" id="PTHR43499:SF1">
    <property type="entry name" value="ABC TRANSPORTER I FAMILY MEMBER 1"/>
    <property type="match status" value="1"/>
</dbReference>
<dbReference type="Pfam" id="PF00005">
    <property type="entry name" value="ABC_tran"/>
    <property type="match status" value="1"/>
</dbReference>
<dbReference type="SMART" id="SM00382">
    <property type="entry name" value="AAA"/>
    <property type="match status" value="1"/>
</dbReference>
<dbReference type="SUPFAM" id="SSF52540">
    <property type="entry name" value="P-loop containing nucleoside triphosphate hydrolases"/>
    <property type="match status" value="1"/>
</dbReference>
<dbReference type="PROSITE" id="PS00211">
    <property type="entry name" value="ABC_TRANSPORTER_1"/>
    <property type="match status" value="1"/>
</dbReference>
<dbReference type="PROSITE" id="PS50893">
    <property type="entry name" value="ABC_TRANSPORTER_2"/>
    <property type="match status" value="1"/>
</dbReference>
<dbReference type="PROSITE" id="PS51243">
    <property type="entry name" value="CCMA"/>
    <property type="match status" value="1"/>
</dbReference>
<name>CCMA_RHIJ3</name>
<keyword id="KW-0067">ATP-binding</keyword>
<keyword id="KW-0997">Cell inner membrane</keyword>
<keyword id="KW-1003">Cell membrane</keyword>
<keyword id="KW-0201">Cytochrome c-type biogenesis</keyword>
<keyword id="KW-0472">Membrane</keyword>
<keyword id="KW-0547">Nucleotide-binding</keyword>
<keyword id="KW-1278">Translocase</keyword>
<keyword id="KW-0813">Transport</keyword>
<sequence>MHLTAEILAARRGEDLIFVNISFHLAAGEALVLTGKNGSGKSTLLRVVAGLLRPEKGTVIFHDEESPGGRHAGEVSHYLGHRNAMKNELTVAENLDFWRAFLGNTGSAAALSVEDATDAVGLSGITHLPFGYLSAGQQRRIAFAKLLVAHRPVWILDEPTAALDASADRLFADLIEAHLEKGGIVLAATHQPLGLRNSQELKMTGFAGVDNGVWG</sequence>
<feature type="chain" id="PRO_0000271947" description="Cytochrome c biogenesis ATP-binding export protein CcmA">
    <location>
        <begin position="1"/>
        <end position="215"/>
    </location>
</feature>
<feature type="domain" description="ABC transporter" evidence="1">
    <location>
        <begin position="3"/>
        <end position="211"/>
    </location>
</feature>
<feature type="binding site" evidence="1">
    <location>
        <begin position="35"/>
        <end position="42"/>
    </location>
    <ligand>
        <name>ATP</name>
        <dbReference type="ChEBI" id="CHEBI:30616"/>
    </ligand>
</feature>
<reference key="1">
    <citation type="journal article" date="2006" name="Genome Biol.">
        <title>The genome of Rhizobium leguminosarum has recognizable core and accessory components.</title>
        <authorList>
            <person name="Young J.P.W."/>
            <person name="Crossman L.C."/>
            <person name="Johnston A.W.B."/>
            <person name="Thomson N.R."/>
            <person name="Ghazoui Z.F."/>
            <person name="Hull K.H."/>
            <person name="Wexler M."/>
            <person name="Curson A.R.J."/>
            <person name="Todd J.D."/>
            <person name="Poole P.S."/>
            <person name="Mauchline T.H."/>
            <person name="East A.K."/>
            <person name="Quail M.A."/>
            <person name="Churcher C."/>
            <person name="Arrowsmith C."/>
            <person name="Cherevach I."/>
            <person name="Chillingworth T."/>
            <person name="Clarke K."/>
            <person name="Cronin A."/>
            <person name="Davis P."/>
            <person name="Fraser A."/>
            <person name="Hance Z."/>
            <person name="Hauser H."/>
            <person name="Jagels K."/>
            <person name="Moule S."/>
            <person name="Mungall K."/>
            <person name="Norbertczak H."/>
            <person name="Rabbinowitsch E."/>
            <person name="Sanders M."/>
            <person name="Simmonds M."/>
            <person name="Whitehead S."/>
            <person name="Parkhill J."/>
        </authorList>
    </citation>
    <scope>NUCLEOTIDE SEQUENCE [LARGE SCALE GENOMIC DNA]</scope>
    <source>
        <strain>DSM 114642 / LMG 32736 / 3841</strain>
    </source>
</reference>
<evidence type="ECO:0000255" key="1">
    <source>
        <dbReference type="HAMAP-Rule" id="MF_01707"/>
    </source>
</evidence>
<comment type="function">
    <text evidence="1">Part of the ABC transporter complex CcmAB involved in the biogenesis of c-type cytochromes; once thought to export heme, this seems not to be the case, but its exact role is uncertain. Responsible for energy coupling to the transport system.</text>
</comment>
<comment type="catalytic activity">
    <reaction evidence="1">
        <text>heme b(in) + ATP + H2O = heme b(out) + ADP + phosphate + H(+)</text>
        <dbReference type="Rhea" id="RHEA:19261"/>
        <dbReference type="ChEBI" id="CHEBI:15377"/>
        <dbReference type="ChEBI" id="CHEBI:15378"/>
        <dbReference type="ChEBI" id="CHEBI:30616"/>
        <dbReference type="ChEBI" id="CHEBI:43474"/>
        <dbReference type="ChEBI" id="CHEBI:60344"/>
        <dbReference type="ChEBI" id="CHEBI:456216"/>
        <dbReference type="EC" id="7.6.2.5"/>
    </reaction>
</comment>
<comment type="subunit">
    <text evidence="1">The complex is composed of two ATP-binding proteins (CcmA) and two transmembrane proteins (CcmB).</text>
</comment>
<comment type="subcellular location">
    <subcellularLocation>
        <location evidence="1">Cell inner membrane</location>
        <topology evidence="1">Peripheral membrane protein</topology>
    </subcellularLocation>
</comment>
<comment type="similarity">
    <text evidence="1">Belongs to the ABC transporter superfamily. CcmA exporter (TC 3.A.1.107) family.</text>
</comment>